<comment type="function">
    <text evidence="4 5">Transcription factor that activates stress response genes via SLE (STRE-like) elements. Required for adaptation to weak acid stress such as acetic acid stress, but seems not involved in the response to heat, osmotic, ethanol, nutrient, oxidative, or heavy-metal stress. Activates a subset of the genes that are repressed by NRG1.</text>
</comment>
<comment type="subcellular location">
    <subcellularLocation>
        <location evidence="1">Nucleus</location>
    </subcellularLocation>
</comment>
<protein>
    <recommendedName>
        <fullName>Transcriptional regulator MNL1</fullName>
    </recommendedName>
    <alternativeName>
        <fullName>MSN2- and MSN4-like protein 1</fullName>
    </alternativeName>
</protein>
<name>MNL1_CANAL</name>
<evidence type="ECO:0000250" key="1"/>
<evidence type="ECO:0000255" key="2">
    <source>
        <dbReference type="PROSITE-ProRule" id="PRU00042"/>
    </source>
</evidence>
<evidence type="ECO:0000256" key="3">
    <source>
        <dbReference type="SAM" id="MobiDB-lite"/>
    </source>
</evidence>
<evidence type="ECO:0000269" key="4">
    <source>
    </source>
</evidence>
<evidence type="ECO:0000269" key="5">
    <source>
    </source>
</evidence>
<organism>
    <name type="scientific">Candida albicans (strain SC5314 / ATCC MYA-2876)</name>
    <name type="common">Yeast</name>
    <dbReference type="NCBI Taxonomy" id="237561"/>
    <lineage>
        <taxon>Eukaryota</taxon>
        <taxon>Fungi</taxon>
        <taxon>Dikarya</taxon>
        <taxon>Ascomycota</taxon>
        <taxon>Saccharomycotina</taxon>
        <taxon>Pichiomycetes</taxon>
        <taxon>Debaryomycetaceae</taxon>
        <taxon>Candida/Lodderomyces clade</taxon>
        <taxon>Candida</taxon>
    </lineage>
</organism>
<gene>
    <name type="primary">MNL1</name>
    <name type="synonym">MSN2</name>
    <name type="ordered locus">CAALFM_CR07450CA</name>
    <name type="ORF">CaO19.13540</name>
    <name type="ORF">CaO19.6121</name>
</gene>
<reference key="1">
    <citation type="journal article" date="2004" name="Proc. Natl. Acad. Sci. U.S.A.">
        <title>The diploid genome sequence of Candida albicans.</title>
        <authorList>
            <person name="Jones T."/>
            <person name="Federspiel N.A."/>
            <person name="Chibana H."/>
            <person name="Dungan J."/>
            <person name="Kalman S."/>
            <person name="Magee B.B."/>
            <person name="Newport G."/>
            <person name="Thorstenson Y.R."/>
            <person name="Agabian N."/>
            <person name="Magee P.T."/>
            <person name="Davis R.W."/>
            <person name="Scherer S."/>
        </authorList>
    </citation>
    <scope>NUCLEOTIDE SEQUENCE [LARGE SCALE GENOMIC DNA]</scope>
    <source>
        <strain>SC5314 / ATCC MYA-2876</strain>
    </source>
</reference>
<reference key="2">
    <citation type="journal article" date="2007" name="Genome Biol.">
        <title>Assembly of the Candida albicans genome into sixteen supercontigs aligned on the eight chromosomes.</title>
        <authorList>
            <person name="van het Hoog M."/>
            <person name="Rast T.J."/>
            <person name="Martchenko M."/>
            <person name="Grindle S."/>
            <person name="Dignard D."/>
            <person name="Hogues H."/>
            <person name="Cuomo C."/>
            <person name="Berriman M."/>
            <person name="Scherer S."/>
            <person name="Magee B.B."/>
            <person name="Whiteway M."/>
            <person name="Chibana H."/>
            <person name="Nantel A."/>
            <person name="Magee P.T."/>
        </authorList>
    </citation>
    <scope>GENOME REANNOTATION</scope>
    <source>
        <strain>SC5314 / ATCC MYA-2876</strain>
    </source>
</reference>
<reference key="3">
    <citation type="journal article" date="2013" name="Genome Biol.">
        <title>Assembly of a phased diploid Candida albicans genome facilitates allele-specific measurements and provides a simple model for repeat and indel structure.</title>
        <authorList>
            <person name="Muzzey D."/>
            <person name="Schwartz K."/>
            <person name="Weissman J.S."/>
            <person name="Sherlock G."/>
        </authorList>
    </citation>
    <scope>NUCLEOTIDE SEQUENCE [LARGE SCALE GENOMIC DNA]</scope>
    <scope>GENOME REANNOTATION</scope>
    <source>
        <strain>SC5314 / ATCC MYA-2876</strain>
    </source>
</reference>
<reference key="4">
    <citation type="journal article" date="2004" name="Eukaryot. Cell">
        <title>Msn2- and Msn4-like transcription factors play no obvious roles in the stress responses of the fungal pathogen Candida albicans.</title>
        <authorList>
            <person name="Nicholls S."/>
            <person name="Straffon M."/>
            <person name="Enjalbert B."/>
            <person name="Nantel A."/>
            <person name="Macaskill S."/>
            <person name="Whiteway M."/>
            <person name="Brown A.J."/>
        </authorList>
    </citation>
    <scope>FUNCTION</scope>
</reference>
<reference key="5">
    <citation type="journal article" date="2008" name="Mol. Biol. Cell">
        <title>MNL1 regulates weak acid-induced stress responses of the fungal pathogen Candida albicans.</title>
        <authorList>
            <person name="Ramsdale M."/>
            <person name="Selway L."/>
            <person name="Stead D."/>
            <person name="Walker J."/>
            <person name="Yin Z."/>
            <person name="Nicholls S.M."/>
            <person name="Crowe J."/>
            <person name="Sheils E.M."/>
            <person name="Brown A.J."/>
        </authorList>
    </citation>
    <scope>FUNCTION</scope>
</reference>
<accession>Q59RR3</accession>
<accession>A0A1D8PTH7</accession>
<proteinExistence type="inferred from homology"/>
<dbReference type="EMBL" id="CP017630">
    <property type="protein sequence ID" value="AOW31438.1"/>
    <property type="molecule type" value="Genomic_DNA"/>
</dbReference>
<dbReference type="RefSeq" id="XP_712328.2">
    <property type="nucleotide sequence ID" value="XM_707235.2"/>
</dbReference>
<dbReference type="STRING" id="237561.Q59RR3"/>
<dbReference type="EnsemblFungi" id="CR_07450C_A-T">
    <property type="protein sequence ID" value="CR_07450C_A-T-p1"/>
    <property type="gene ID" value="CR_07450C_A"/>
</dbReference>
<dbReference type="GeneID" id="3646050"/>
<dbReference type="KEGG" id="cal:CAALFM_CR07450CA"/>
<dbReference type="CGD" id="CAL0000183599">
    <property type="gene designation" value="MNL1"/>
</dbReference>
<dbReference type="VEuPathDB" id="FungiDB:CR_07450C_A"/>
<dbReference type="eggNOG" id="KOG1721">
    <property type="taxonomic scope" value="Eukaryota"/>
</dbReference>
<dbReference type="HOGENOM" id="CLU_320537_0_0_1"/>
<dbReference type="InParanoid" id="Q59RR3"/>
<dbReference type="OrthoDB" id="654211at2759"/>
<dbReference type="PRO" id="PR:Q59RR3"/>
<dbReference type="Proteomes" id="UP000000559">
    <property type="component" value="Chromosome R"/>
</dbReference>
<dbReference type="GO" id="GO:0005634">
    <property type="term" value="C:nucleus"/>
    <property type="evidence" value="ECO:0000318"/>
    <property type="project" value="GO_Central"/>
</dbReference>
<dbReference type="GO" id="GO:0000987">
    <property type="term" value="F:cis-regulatory region sequence-specific DNA binding"/>
    <property type="evidence" value="ECO:0000318"/>
    <property type="project" value="GO_Central"/>
</dbReference>
<dbReference type="GO" id="GO:0000981">
    <property type="term" value="F:DNA-binding transcription factor activity, RNA polymerase II-specific"/>
    <property type="evidence" value="ECO:0000318"/>
    <property type="project" value="GO_Central"/>
</dbReference>
<dbReference type="GO" id="GO:0008270">
    <property type="term" value="F:zinc ion binding"/>
    <property type="evidence" value="ECO:0007669"/>
    <property type="project" value="UniProtKB-KW"/>
</dbReference>
<dbReference type="GO" id="GO:0071311">
    <property type="term" value="P:cellular response to acetate"/>
    <property type="evidence" value="ECO:0000315"/>
    <property type="project" value="CGD"/>
</dbReference>
<dbReference type="GO" id="GO:0006357">
    <property type="term" value="P:regulation of transcription by RNA polymerase II"/>
    <property type="evidence" value="ECO:0000315"/>
    <property type="project" value="CGD"/>
</dbReference>
<dbReference type="GO" id="GO:0042594">
    <property type="term" value="P:response to starvation"/>
    <property type="evidence" value="ECO:0000318"/>
    <property type="project" value="GO_Central"/>
</dbReference>
<dbReference type="FunFam" id="3.30.160.60:FF:002817">
    <property type="entry name" value="Transcriptional regulator MNL1"/>
    <property type="match status" value="1"/>
</dbReference>
<dbReference type="Gene3D" id="3.30.160.60">
    <property type="entry name" value="Classic Zinc Finger"/>
    <property type="match status" value="2"/>
</dbReference>
<dbReference type="InterPro" id="IPR052127">
    <property type="entry name" value="STE12_transcription_factor"/>
</dbReference>
<dbReference type="InterPro" id="IPR036236">
    <property type="entry name" value="Znf_C2H2_sf"/>
</dbReference>
<dbReference type="InterPro" id="IPR013087">
    <property type="entry name" value="Znf_C2H2_type"/>
</dbReference>
<dbReference type="PANTHER" id="PTHR47427">
    <property type="entry name" value="PROTEIN STE12"/>
    <property type="match status" value="1"/>
</dbReference>
<dbReference type="PANTHER" id="PTHR47427:SF1">
    <property type="entry name" value="PROTEIN STE12"/>
    <property type="match status" value="1"/>
</dbReference>
<dbReference type="Pfam" id="PF00096">
    <property type="entry name" value="zf-C2H2"/>
    <property type="match status" value="1"/>
</dbReference>
<dbReference type="SMART" id="SM00355">
    <property type="entry name" value="ZnF_C2H2"/>
    <property type="match status" value="2"/>
</dbReference>
<dbReference type="SUPFAM" id="SSF57667">
    <property type="entry name" value="beta-beta-alpha zinc fingers"/>
    <property type="match status" value="1"/>
</dbReference>
<dbReference type="PROSITE" id="PS00028">
    <property type="entry name" value="ZINC_FINGER_C2H2_1"/>
    <property type="match status" value="2"/>
</dbReference>
<dbReference type="PROSITE" id="PS50157">
    <property type="entry name" value="ZINC_FINGER_C2H2_2"/>
    <property type="match status" value="2"/>
</dbReference>
<feature type="chain" id="PRO_0000426086" description="Transcriptional regulator MNL1">
    <location>
        <begin position="1"/>
        <end position="905"/>
    </location>
</feature>
<feature type="zinc finger region" description="C2H2-type 1" evidence="2">
    <location>
        <begin position="832"/>
        <end position="855"/>
    </location>
</feature>
<feature type="zinc finger region" description="C2H2-type 2" evidence="2">
    <location>
        <begin position="861"/>
        <end position="883"/>
    </location>
</feature>
<feature type="region of interest" description="Disordered" evidence="3">
    <location>
        <begin position="1"/>
        <end position="34"/>
    </location>
</feature>
<feature type="region of interest" description="Disordered" evidence="3">
    <location>
        <begin position="312"/>
        <end position="340"/>
    </location>
</feature>
<feature type="region of interest" description="Disordered" evidence="3">
    <location>
        <begin position="383"/>
        <end position="419"/>
    </location>
</feature>
<feature type="region of interest" description="Disordered" evidence="3">
    <location>
        <begin position="434"/>
        <end position="460"/>
    </location>
</feature>
<feature type="region of interest" description="Disordered" evidence="3">
    <location>
        <begin position="525"/>
        <end position="544"/>
    </location>
</feature>
<feature type="region of interest" description="Disordered" evidence="3">
    <location>
        <begin position="584"/>
        <end position="613"/>
    </location>
</feature>
<feature type="region of interest" description="Disordered" evidence="3">
    <location>
        <begin position="625"/>
        <end position="671"/>
    </location>
</feature>
<feature type="region of interest" description="Disordered" evidence="3">
    <location>
        <begin position="685"/>
        <end position="733"/>
    </location>
</feature>
<feature type="region of interest" description="Disordered" evidence="3">
    <location>
        <begin position="885"/>
        <end position="905"/>
    </location>
</feature>
<feature type="compositionally biased region" description="Polar residues" evidence="3">
    <location>
        <begin position="1"/>
        <end position="29"/>
    </location>
</feature>
<feature type="compositionally biased region" description="Low complexity" evidence="3">
    <location>
        <begin position="312"/>
        <end position="334"/>
    </location>
</feature>
<feature type="compositionally biased region" description="Low complexity" evidence="3">
    <location>
        <begin position="439"/>
        <end position="460"/>
    </location>
</feature>
<feature type="compositionally biased region" description="Polar residues" evidence="3">
    <location>
        <begin position="584"/>
        <end position="598"/>
    </location>
</feature>
<feature type="compositionally biased region" description="Basic residues" evidence="3">
    <location>
        <begin position="628"/>
        <end position="639"/>
    </location>
</feature>
<feature type="compositionally biased region" description="Low complexity" evidence="3">
    <location>
        <begin position="647"/>
        <end position="669"/>
    </location>
</feature>
<feature type="compositionally biased region" description="Low complexity" evidence="3">
    <location>
        <begin position="690"/>
        <end position="710"/>
    </location>
</feature>
<sequence>MDSHNNIDQSVSELLSDPASVQQSYNSQLRGPEFDQQRQIRNQVSPFNKMTDTIDNDNIPLSSDYDKLYQQFSIPSQQQYENNSDNVYKTNNDLAALASPLNMDLDLAPSDQQQQPQQSQQQFLNDFSNLQPHLNNSQEQVQLNGLTSNILSNPQITVNMPGAYHQNYNCDQMEIDDSPPFTIESDLYFEQQTDNNSIVTSNRVHNQPDVESMFNNQLSVPSLQRTELSPQQHETNVTTGRPQESAFGSFDNNSRVSSFANVNNAGTNLFVNGKDLYFDDESHHRTGRLRNGSIDSYYAANVINHQLHLQQQTQAQAQAHQQQQQQSQQQHSPQDLASHTSLPSKSIYNELSPLTTTTSRASSIQSGQPSFFSAQQYFSRNSMDQVPSSLHRPSFDLYNHRPSIDSQHSQQSQQRNARYTSFTSSISNILPFMSEKNTNHNNRSPPTPPTSTSSPQNLLSSNQSRHLIRSIFKTNPTPIVSDAGNSNGNIVNGGSGTIDAENLPDAPYASGTINDSEFLILSSPTKEEPEDELMQPKKVKKPKRSLFTRFKTPVKQEQPDSEMAVSAPVDELKPDETVIDMVGNISSHHSSGTPSITTGAGGNTLEHSISESSFQEPDYAALFENVGKRKNKSYRKPKGKTKEEEQQQQQLPLSSGTAGGTSSNNSTGTVEKTLFFNKTKIKKEPASERSSLLDNASAGNASASSSEASSIQNAIGSDDHNGPPLTSAPTSSTLANASKRILSSKLISKKKSTSKLKEYTAAELEDMCTVSSLETPVATMISKGIEVEVDLASLDLPPDTKIFPTSIINNKNRTRGRKENKEADLSDTSKIYLCNLCQRRFKRHEHLKRHFRSLHTFEKPYNCDICHKKFSRSDNLNQHLKIHKQEDEKDCADAETGVGMDDASG</sequence>
<keyword id="KW-0010">Activator</keyword>
<keyword id="KW-0238">DNA-binding</keyword>
<keyword id="KW-0479">Metal-binding</keyword>
<keyword id="KW-0539">Nucleus</keyword>
<keyword id="KW-1185">Reference proteome</keyword>
<keyword id="KW-0677">Repeat</keyword>
<keyword id="KW-0804">Transcription</keyword>
<keyword id="KW-0805">Transcription regulation</keyword>
<keyword id="KW-0862">Zinc</keyword>
<keyword id="KW-0863">Zinc-finger</keyword>